<proteinExistence type="inferred from homology"/>
<organism>
    <name type="scientific">Dechloromonas aromatica (strain RCB)</name>
    <dbReference type="NCBI Taxonomy" id="159087"/>
    <lineage>
        <taxon>Bacteria</taxon>
        <taxon>Pseudomonadati</taxon>
        <taxon>Pseudomonadota</taxon>
        <taxon>Betaproteobacteria</taxon>
        <taxon>Rhodocyclales</taxon>
        <taxon>Azonexaceae</taxon>
        <taxon>Dechloromonas</taxon>
    </lineage>
</organism>
<reference key="1">
    <citation type="journal article" date="2009" name="BMC Genomics">
        <title>Metabolic analysis of the soil microbe Dechloromonas aromatica str. RCB: indications of a surprisingly complex life-style and cryptic anaerobic pathways for aromatic degradation.</title>
        <authorList>
            <person name="Salinero K.K."/>
            <person name="Keller K."/>
            <person name="Feil W.S."/>
            <person name="Feil H."/>
            <person name="Trong S."/>
            <person name="Di Bartolo G."/>
            <person name="Lapidus A."/>
        </authorList>
    </citation>
    <scope>NUCLEOTIDE SEQUENCE [LARGE SCALE GENOMIC DNA]</scope>
    <source>
        <strain>RCB</strain>
    </source>
</reference>
<sequence length="299" mass="32048">MQFKRAWKQVDGVLLLDKPLGMTSNDALQKARRLFSAAKGGHTGTLDPLATGLLPLCFGEATKFSADLLDADKTYEAVLKLGVTTDSGDAEGQVTSTAMVDIQKEQVSEVLPRFVGDIQQIPPMHSALKRNGRPLYELARQGIEVEREPRAVTIFAIDCLDFSGDLLTLRVACSKGTYIRVLAADIGKALGCGAHLAALRRIVVGDIRLGNSVTLAELETLDEAGRMERLLPVDALLQSLPIVGVEGPEAERFRHGNPVSLPAGLAGKARVYAEGRLIGVGEPGHGGLLWPKRLVQLAD</sequence>
<feature type="chain" id="PRO_0000229353" description="tRNA pseudouridine synthase B">
    <location>
        <begin position="1"/>
        <end position="299"/>
    </location>
</feature>
<feature type="active site" description="Nucleophile" evidence="1">
    <location>
        <position position="47"/>
    </location>
</feature>
<comment type="function">
    <text evidence="1">Responsible for synthesis of pseudouridine from uracil-55 in the psi GC loop of transfer RNAs.</text>
</comment>
<comment type="catalytic activity">
    <reaction evidence="1">
        <text>uridine(55) in tRNA = pseudouridine(55) in tRNA</text>
        <dbReference type="Rhea" id="RHEA:42532"/>
        <dbReference type="Rhea" id="RHEA-COMP:10101"/>
        <dbReference type="Rhea" id="RHEA-COMP:10102"/>
        <dbReference type="ChEBI" id="CHEBI:65314"/>
        <dbReference type="ChEBI" id="CHEBI:65315"/>
        <dbReference type="EC" id="5.4.99.25"/>
    </reaction>
</comment>
<comment type="similarity">
    <text evidence="1">Belongs to the pseudouridine synthase TruB family. Type 1 subfamily.</text>
</comment>
<protein>
    <recommendedName>
        <fullName evidence="1">tRNA pseudouridine synthase B</fullName>
        <ecNumber evidence="1">5.4.99.25</ecNumber>
    </recommendedName>
    <alternativeName>
        <fullName evidence="1">tRNA pseudouridine(55) synthase</fullName>
        <shortName evidence="1">Psi55 synthase</shortName>
    </alternativeName>
    <alternativeName>
        <fullName evidence="1">tRNA pseudouridylate synthase</fullName>
    </alternativeName>
    <alternativeName>
        <fullName evidence="1">tRNA-uridine isomerase</fullName>
    </alternativeName>
</protein>
<dbReference type="EC" id="5.4.99.25" evidence="1"/>
<dbReference type="EMBL" id="CP000089">
    <property type="protein sequence ID" value="AAZ47185.1"/>
    <property type="molecule type" value="Genomic_DNA"/>
</dbReference>
<dbReference type="SMR" id="Q47D96"/>
<dbReference type="STRING" id="159087.Daro_2450"/>
<dbReference type="KEGG" id="dar:Daro_2450"/>
<dbReference type="eggNOG" id="COG0130">
    <property type="taxonomic scope" value="Bacteria"/>
</dbReference>
<dbReference type="HOGENOM" id="CLU_032087_0_3_4"/>
<dbReference type="OrthoDB" id="9802309at2"/>
<dbReference type="GO" id="GO:0003723">
    <property type="term" value="F:RNA binding"/>
    <property type="evidence" value="ECO:0007669"/>
    <property type="project" value="InterPro"/>
</dbReference>
<dbReference type="GO" id="GO:0160148">
    <property type="term" value="F:tRNA pseudouridine(55) synthase activity"/>
    <property type="evidence" value="ECO:0007669"/>
    <property type="project" value="UniProtKB-EC"/>
</dbReference>
<dbReference type="GO" id="GO:1990481">
    <property type="term" value="P:mRNA pseudouridine synthesis"/>
    <property type="evidence" value="ECO:0007669"/>
    <property type="project" value="TreeGrafter"/>
</dbReference>
<dbReference type="GO" id="GO:0031119">
    <property type="term" value="P:tRNA pseudouridine synthesis"/>
    <property type="evidence" value="ECO:0007669"/>
    <property type="project" value="UniProtKB-UniRule"/>
</dbReference>
<dbReference type="CDD" id="cd02573">
    <property type="entry name" value="PseudoU_synth_EcTruB"/>
    <property type="match status" value="1"/>
</dbReference>
<dbReference type="CDD" id="cd21152">
    <property type="entry name" value="PUA_TruB_bacterial"/>
    <property type="match status" value="1"/>
</dbReference>
<dbReference type="FunFam" id="3.30.2350.10:FF:000011">
    <property type="entry name" value="tRNA pseudouridine synthase B"/>
    <property type="match status" value="1"/>
</dbReference>
<dbReference type="Gene3D" id="3.30.2350.10">
    <property type="entry name" value="Pseudouridine synthase"/>
    <property type="match status" value="1"/>
</dbReference>
<dbReference type="Gene3D" id="2.30.130.10">
    <property type="entry name" value="PUA domain"/>
    <property type="match status" value="1"/>
</dbReference>
<dbReference type="HAMAP" id="MF_01080">
    <property type="entry name" value="TruB_bact"/>
    <property type="match status" value="1"/>
</dbReference>
<dbReference type="InterPro" id="IPR020103">
    <property type="entry name" value="PsdUridine_synth_cat_dom_sf"/>
</dbReference>
<dbReference type="InterPro" id="IPR002501">
    <property type="entry name" value="PsdUridine_synth_N"/>
</dbReference>
<dbReference type="InterPro" id="IPR015947">
    <property type="entry name" value="PUA-like_sf"/>
</dbReference>
<dbReference type="InterPro" id="IPR036974">
    <property type="entry name" value="PUA_sf"/>
</dbReference>
<dbReference type="InterPro" id="IPR014780">
    <property type="entry name" value="tRNA_psdUridine_synth_TruB"/>
</dbReference>
<dbReference type="InterPro" id="IPR015240">
    <property type="entry name" value="tRNA_sdUridine_synth_fam1_C"/>
</dbReference>
<dbReference type="InterPro" id="IPR032819">
    <property type="entry name" value="TruB_C"/>
</dbReference>
<dbReference type="NCBIfam" id="TIGR00431">
    <property type="entry name" value="TruB"/>
    <property type="match status" value="1"/>
</dbReference>
<dbReference type="PANTHER" id="PTHR13767:SF2">
    <property type="entry name" value="PSEUDOURIDYLATE SYNTHASE TRUB1"/>
    <property type="match status" value="1"/>
</dbReference>
<dbReference type="PANTHER" id="PTHR13767">
    <property type="entry name" value="TRNA-PSEUDOURIDINE SYNTHASE"/>
    <property type="match status" value="1"/>
</dbReference>
<dbReference type="Pfam" id="PF09157">
    <property type="entry name" value="TruB-C_2"/>
    <property type="match status" value="1"/>
</dbReference>
<dbReference type="Pfam" id="PF16198">
    <property type="entry name" value="TruB_C_2"/>
    <property type="match status" value="1"/>
</dbReference>
<dbReference type="Pfam" id="PF01509">
    <property type="entry name" value="TruB_N"/>
    <property type="match status" value="1"/>
</dbReference>
<dbReference type="SUPFAM" id="SSF55120">
    <property type="entry name" value="Pseudouridine synthase"/>
    <property type="match status" value="1"/>
</dbReference>
<dbReference type="SUPFAM" id="SSF88697">
    <property type="entry name" value="PUA domain-like"/>
    <property type="match status" value="1"/>
</dbReference>
<keyword id="KW-0413">Isomerase</keyword>
<keyword id="KW-0819">tRNA processing</keyword>
<accession>Q47D96</accession>
<name>TRUB_DECAR</name>
<evidence type="ECO:0000255" key="1">
    <source>
        <dbReference type="HAMAP-Rule" id="MF_01080"/>
    </source>
</evidence>
<gene>
    <name evidence="1" type="primary">truB</name>
    <name type="ordered locus">Daro_2450</name>
</gene>